<comment type="function">
    <text evidence="1">Catalyzes the rearrangement of 1-deoxy-D-xylulose 5-phosphate (DXP) to produce the thiazole phosphate moiety of thiamine. Sulfur is provided by the thiocarboxylate moiety of the carrier protein ThiS. In vitro, sulfur can be provided by H(2)S.</text>
</comment>
<comment type="catalytic activity">
    <reaction evidence="1">
        <text>[ThiS sulfur-carrier protein]-C-terminal-Gly-aminoethanethioate + 2-iminoacetate + 1-deoxy-D-xylulose 5-phosphate = [ThiS sulfur-carrier protein]-C-terminal Gly-Gly + 2-[(2R,5Z)-2-carboxy-4-methylthiazol-5(2H)-ylidene]ethyl phosphate + 2 H2O + H(+)</text>
        <dbReference type="Rhea" id="RHEA:26297"/>
        <dbReference type="Rhea" id="RHEA-COMP:12909"/>
        <dbReference type="Rhea" id="RHEA-COMP:19908"/>
        <dbReference type="ChEBI" id="CHEBI:15377"/>
        <dbReference type="ChEBI" id="CHEBI:15378"/>
        <dbReference type="ChEBI" id="CHEBI:57792"/>
        <dbReference type="ChEBI" id="CHEBI:62899"/>
        <dbReference type="ChEBI" id="CHEBI:77846"/>
        <dbReference type="ChEBI" id="CHEBI:90778"/>
        <dbReference type="ChEBI" id="CHEBI:232372"/>
        <dbReference type="EC" id="2.8.1.10"/>
    </reaction>
</comment>
<comment type="pathway">
    <text evidence="1">Cofactor biosynthesis; thiamine diphosphate biosynthesis.</text>
</comment>
<comment type="subunit">
    <text evidence="1">Homotetramer. Forms heterodimers with either ThiH or ThiS.</text>
</comment>
<comment type="subcellular location">
    <subcellularLocation>
        <location evidence="1">Cytoplasm</location>
    </subcellularLocation>
</comment>
<comment type="similarity">
    <text evidence="1">Belongs to the ThiG family.</text>
</comment>
<organism>
    <name type="scientific">Hydrogenovibrio crunogenus (strain DSM 25203 / XCL-2)</name>
    <name type="common">Thiomicrospira crunogena</name>
    <dbReference type="NCBI Taxonomy" id="317025"/>
    <lineage>
        <taxon>Bacteria</taxon>
        <taxon>Pseudomonadati</taxon>
        <taxon>Pseudomonadota</taxon>
        <taxon>Gammaproteobacteria</taxon>
        <taxon>Thiotrichales</taxon>
        <taxon>Piscirickettsiaceae</taxon>
        <taxon>Hydrogenovibrio</taxon>
    </lineage>
</organism>
<dbReference type="EC" id="2.8.1.10" evidence="1"/>
<dbReference type="EMBL" id="CP000109">
    <property type="protein sequence ID" value="ABB40741.1"/>
    <property type="molecule type" value="Genomic_DNA"/>
</dbReference>
<dbReference type="SMR" id="Q31JD2"/>
<dbReference type="STRING" id="317025.Tcr_0145"/>
<dbReference type="KEGG" id="tcx:Tcr_0145"/>
<dbReference type="eggNOG" id="COG2022">
    <property type="taxonomic scope" value="Bacteria"/>
</dbReference>
<dbReference type="HOGENOM" id="CLU_062233_1_0_6"/>
<dbReference type="UniPathway" id="UPA00060"/>
<dbReference type="GO" id="GO:0005737">
    <property type="term" value="C:cytoplasm"/>
    <property type="evidence" value="ECO:0007669"/>
    <property type="project" value="UniProtKB-SubCell"/>
</dbReference>
<dbReference type="GO" id="GO:1990107">
    <property type="term" value="F:thiazole synthase activity"/>
    <property type="evidence" value="ECO:0007669"/>
    <property type="project" value="UniProtKB-EC"/>
</dbReference>
<dbReference type="GO" id="GO:0009229">
    <property type="term" value="P:thiamine diphosphate biosynthetic process"/>
    <property type="evidence" value="ECO:0007669"/>
    <property type="project" value="UniProtKB-UniRule"/>
</dbReference>
<dbReference type="CDD" id="cd04728">
    <property type="entry name" value="ThiG"/>
    <property type="match status" value="1"/>
</dbReference>
<dbReference type="Gene3D" id="3.20.20.70">
    <property type="entry name" value="Aldolase class I"/>
    <property type="match status" value="1"/>
</dbReference>
<dbReference type="HAMAP" id="MF_00443">
    <property type="entry name" value="ThiG"/>
    <property type="match status" value="1"/>
</dbReference>
<dbReference type="InterPro" id="IPR013785">
    <property type="entry name" value="Aldolase_TIM"/>
</dbReference>
<dbReference type="InterPro" id="IPR033983">
    <property type="entry name" value="Thiazole_synthase_ThiG"/>
</dbReference>
<dbReference type="InterPro" id="IPR008867">
    <property type="entry name" value="ThiG"/>
</dbReference>
<dbReference type="PANTHER" id="PTHR34266">
    <property type="entry name" value="THIAZOLE SYNTHASE"/>
    <property type="match status" value="1"/>
</dbReference>
<dbReference type="PANTHER" id="PTHR34266:SF2">
    <property type="entry name" value="THIAZOLE SYNTHASE"/>
    <property type="match status" value="1"/>
</dbReference>
<dbReference type="Pfam" id="PF05690">
    <property type="entry name" value="ThiG"/>
    <property type="match status" value="1"/>
</dbReference>
<dbReference type="SUPFAM" id="SSF110399">
    <property type="entry name" value="ThiG-like"/>
    <property type="match status" value="1"/>
</dbReference>
<keyword id="KW-0963">Cytoplasm</keyword>
<keyword id="KW-0704">Schiff base</keyword>
<keyword id="KW-0784">Thiamine biosynthesis</keyword>
<keyword id="KW-0808">Transferase</keyword>
<gene>
    <name evidence="1" type="primary">thiG</name>
    <name type="ordered locus">Tcr_0145</name>
</gene>
<feature type="chain" id="PRO_0000236374" description="Thiazole synthase">
    <location>
        <begin position="1"/>
        <end position="273"/>
    </location>
</feature>
<feature type="active site" description="Schiff-base intermediate with DXP" evidence="1">
    <location>
        <position position="110"/>
    </location>
</feature>
<feature type="binding site" evidence="1">
    <location>
        <position position="171"/>
    </location>
    <ligand>
        <name>1-deoxy-D-xylulose 5-phosphate</name>
        <dbReference type="ChEBI" id="CHEBI:57792"/>
    </ligand>
</feature>
<feature type="binding site" evidence="1">
    <location>
        <begin position="198"/>
        <end position="199"/>
    </location>
    <ligand>
        <name>1-deoxy-D-xylulose 5-phosphate</name>
        <dbReference type="ChEBI" id="CHEBI:57792"/>
    </ligand>
</feature>
<feature type="binding site" evidence="1">
    <location>
        <begin position="220"/>
        <end position="221"/>
    </location>
    <ligand>
        <name>1-deoxy-D-xylulose 5-phosphate</name>
        <dbReference type="ChEBI" id="CHEBI:57792"/>
    </ligand>
</feature>
<sequence length="273" mass="29443">MNLTPEHAQKSSPMSWTVGGKTLNSRLLIGSALYPSPQAMQGAIEASGAEIVTVSLRRQSAGDQAGKTFWNMIKSLNCHVLPNTAGCHSAKEAITTAQMAREVFETNWIKLEVIGDQYNLQPDPFELLKATETLVNDGFEVFPYTTDDLVLAQRLVEAGCNILMPWGSPIGSGKGLMNPYNLNAIRQRFPELTLIVDAGIGKPSHAVQALEMGYNGILLNSAVALSPNPITMGKAFKSAVEAGVYAFDAGTMQERDLASPSTPVVGTPFWHQH</sequence>
<accession>Q31JD2</accession>
<evidence type="ECO:0000255" key="1">
    <source>
        <dbReference type="HAMAP-Rule" id="MF_00443"/>
    </source>
</evidence>
<name>THIG_HYDCU</name>
<protein>
    <recommendedName>
        <fullName evidence="1">Thiazole synthase</fullName>
        <ecNumber evidence="1">2.8.1.10</ecNumber>
    </recommendedName>
</protein>
<reference key="1">
    <citation type="journal article" date="2006" name="PLoS Biol.">
        <title>The genome of deep-sea vent chemolithoautotroph Thiomicrospira crunogena XCL-2.</title>
        <authorList>
            <person name="Scott K.M."/>
            <person name="Sievert S.M."/>
            <person name="Abril F.N."/>
            <person name="Ball L.A."/>
            <person name="Barrett C.J."/>
            <person name="Blake R.A."/>
            <person name="Boller A.J."/>
            <person name="Chain P.S.G."/>
            <person name="Clark J.A."/>
            <person name="Davis C.R."/>
            <person name="Detter C."/>
            <person name="Do K.F."/>
            <person name="Dobrinski K.P."/>
            <person name="Faza B.I."/>
            <person name="Fitzpatrick K.A."/>
            <person name="Freyermuth S.K."/>
            <person name="Harmer T.L."/>
            <person name="Hauser L.J."/>
            <person name="Huegler M."/>
            <person name="Kerfeld C.A."/>
            <person name="Klotz M.G."/>
            <person name="Kong W.W."/>
            <person name="Land M."/>
            <person name="Lapidus A."/>
            <person name="Larimer F.W."/>
            <person name="Longo D.L."/>
            <person name="Lucas S."/>
            <person name="Malfatti S.A."/>
            <person name="Massey S.E."/>
            <person name="Martin D.D."/>
            <person name="McCuddin Z."/>
            <person name="Meyer F."/>
            <person name="Moore J.L."/>
            <person name="Ocampo L.H. Jr."/>
            <person name="Paul J.H."/>
            <person name="Paulsen I.T."/>
            <person name="Reep D.K."/>
            <person name="Ren Q."/>
            <person name="Ross R.L."/>
            <person name="Sato P.Y."/>
            <person name="Thomas P."/>
            <person name="Tinkham L.E."/>
            <person name="Zeruth G.T."/>
        </authorList>
    </citation>
    <scope>NUCLEOTIDE SEQUENCE [LARGE SCALE GENOMIC DNA]</scope>
    <source>
        <strain>DSM 25203 / XCL-2</strain>
    </source>
</reference>
<proteinExistence type="inferred from homology"/>